<reference key="1">
    <citation type="journal article" date="2010" name="PLoS Genet.">
        <title>Genome sequence of the plant growth promoting endophytic bacterium Enterobacter sp. 638.</title>
        <authorList>
            <person name="Taghavi S."/>
            <person name="van der Lelie D."/>
            <person name="Hoffman A."/>
            <person name="Zhang Y.B."/>
            <person name="Walla M.D."/>
            <person name="Vangronsveld J."/>
            <person name="Newman L."/>
            <person name="Monchy S."/>
        </authorList>
    </citation>
    <scope>NUCLEOTIDE SEQUENCE [LARGE SCALE GENOMIC DNA]</scope>
    <source>
        <strain>638</strain>
    </source>
</reference>
<proteinExistence type="inferred from homology"/>
<gene>
    <name evidence="1" type="primary">ihfA</name>
    <name evidence="1" type="synonym">himA</name>
    <name type="ordered locus">Ent638_1730</name>
</gene>
<dbReference type="EMBL" id="CP000653">
    <property type="protein sequence ID" value="ABP60409.1"/>
    <property type="molecule type" value="Genomic_DNA"/>
</dbReference>
<dbReference type="RefSeq" id="WP_003857805.1">
    <property type="nucleotide sequence ID" value="NC_009436.1"/>
</dbReference>
<dbReference type="SMR" id="A4W9M9"/>
<dbReference type="STRING" id="399742.Ent638_1730"/>
<dbReference type="GeneID" id="97601353"/>
<dbReference type="KEGG" id="ent:Ent638_1730"/>
<dbReference type="eggNOG" id="COG0776">
    <property type="taxonomic scope" value="Bacteria"/>
</dbReference>
<dbReference type="HOGENOM" id="CLU_105066_1_3_6"/>
<dbReference type="OrthoDB" id="9797747at2"/>
<dbReference type="Proteomes" id="UP000000230">
    <property type="component" value="Chromosome"/>
</dbReference>
<dbReference type="GO" id="GO:0005829">
    <property type="term" value="C:cytosol"/>
    <property type="evidence" value="ECO:0007669"/>
    <property type="project" value="TreeGrafter"/>
</dbReference>
<dbReference type="GO" id="GO:0003677">
    <property type="term" value="F:DNA binding"/>
    <property type="evidence" value="ECO:0007669"/>
    <property type="project" value="UniProtKB-UniRule"/>
</dbReference>
<dbReference type="GO" id="GO:0030527">
    <property type="term" value="F:structural constituent of chromatin"/>
    <property type="evidence" value="ECO:0007669"/>
    <property type="project" value="InterPro"/>
</dbReference>
<dbReference type="GO" id="GO:0006310">
    <property type="term" value="P:DNA recombination"/>
    <property type="evidence" value="ECO:0007669"/>
    <property type="project" value="UniProtKB-UniRule"/>
</dbReference>
<dbReference type="GO" id="GO:0009893">
    <property type="term" value="P:positive regulation of metabolic process"/>
    <property type="evidence" value="ECO:0007669"/>
    <property type="project" value="UniProtKB-ARBA"/>
</dbReference>
<dbReference type="GO" id="GO:0006355">
    <property type="term" value="P:regulation of DNA-templated transcription"/>
    <property type="evidence" value="ECO:0007669"/>
    <property type="project" value="UniProtKB-UniRule"/>
</dbReference>
<dbReference type="GO" id="GO:0006417">
    <property type="term" value="P:regulation of translation"/>
    <property type="evidence" value="ECO:0007669"/>
    <property type="project" value="UniProtKB-UniRule"/>
</dbReference>
<dbReference type="CDD" id="cd13835">
    <property type="entry name" value="IHF_A"/>
    <property type="match status" value="1"/>
</dbReference>
<dbReference type="FunFam" id="4.10.520.10:FF:000002">
    <property type="entry name" value="Integration host factor subunit alpha"/>
    <property type="match status" value="1"/>
</dbReference>
<dbReference type="Gene3D" id="4.10.520.10">
    <property type="entry name" value="IHF-like DNA-binding proteins"/>
    <property type="match status" value="1"/>
</dbReference>
<dbReference type="HAMAP" id="MF_00380">
    <property type="entry name" value="IHF_alpha"/>
    <property type="match status" value="1"/>
</dbReference>
<dbReference type="InterPro" id="IPR000119">
    <property type="entry name" value="Hist_DNA-bd"/>
</dbReference>
<dbReference type="InterPro" id="IPR020816">
    <property type="entry name" value="Histone-like_DNA-bd_CS"/>
</dbReference>
<dbReference type="InterPro" id="IPR010992">
    <property type="entry name" value="IHF-like_DNA-bd_dom_sf"/>
</dbReference>
<dbReference type="InterPro" id="IPR005684">
    <property type="entry name" value="IHF_alpha"/>
</dbReference>
<dbReference type="NCBIfam" id="TIGR00987">
    <property type="entry name" value="himA"/>
    <property type="match status" value="1"/>
</dbReference>
<dbReference type="NCBIfam" id="NF001401">
    <property type="entry name" value="PRK00285.1"/>
    <property type="match status" value="1"/>
</dbReference>
<dbReference type="PANTHER" id="PTHR33175">
    <property type="entry name" value="DNA-BINDING PROTEIN HU"/>
    <property type="match status" value="1"/>
</dbReference>
<dbReference type="PANTHER" id="PTHR33175:SF2">
    <property type="entry name" value="INTEGRATION HOST FACTOR SUBUNIT ALPHA"/>
    <property type="match status" value="1"/>
</dbReference>
<dbReference type="Pfam" id="PF00216">
    <property type="entry name" value="Bac_DNA_binding"/>
    <property type="match status" value="1"/>
</dbReference>
<dbReference type="PRINTS" id="PR01727">
    <property type="entry name" value="DNABINDINGHU"/>
</dbReference>
<dbReference type="SMART" id="SM00411">
    <property type="entry name" value="BHL"/>
    <property type="match status" value="1"/>
</dbReference>
<dbReference type="SUPFAM" id="SSF47729">
    <property type="entry name" value="IHF-like DNA-binding proteins"/>
    <property type="match status" value="1"/>
</dbReference>
<dbReference type="PROSITE" id="PS00045">
    <property type="entry name" value="HISTONE_LIKE"/>
    <property type="match status" value="1"/>
</dbReference>
<protein>
    <recommendedName>
        <fullName evidence="1">Integration host factor subunit alpha</fullName>
        <shortName evidence="1">IHF-alpha</shortName>
    </recommendedName>
</protein>
<name>IHFA_ENT38</name>
<feature type="chain" id="PRO_1000060542" description="Integration host factor subunit alpha">
    <location>
        <begin position="1"/>
        <end position="99"/>
    </location>
</feature>
<evidence type="ECO:0000255" key="1">
    <source>
        <dbReference type="HAMAP-Rule" id="MF_00380"/>
    </source>
</evidence>
<organism>
    <name type="scientific">Enterobacter sp. (strain 638)</name>
    <dbReference type="NCBI Taxonomy" id="399742"/>
    <lineage>
        <taxon>Bacteria</taxon>
        <taxon>Pseudomonadati</taxon>
        <taxon>Pseudomonadota</taxon>
        <taxon>Gammaproteobacteria</taxon>
        <taxon>Enterobacterales</taxon>
        <taxon>Enterobacteriaceae</taxon>
        <taxon>Enterobacter</taxon>
    </lineage>
</organism>
<keyword id="KW-0233">DNA recombination</keyword>
<keyword id="KW-0238">DNA-binding</keyword>
<keyword id="KW-0804">Transcription</keyword>
<keyword id="KW-0805">Transcription regulation</keyword>
<keyword id="KW-0810">Translation regulation</keyword>
<accession>A4W9M9</accession>
<sequence>MALTKAEMSEYLFDKLGLSKRDAKELVELFFEEIRRALENGEQVKLSGFGNFDLRDKNQRPGRNPKTGEDIPITARRVVTFRPGQKLKSRVENATPKAE</sequence>
<comment type="function">
    <text evidence="1">This protein is one of the two subunits of integration host factor, a specific DNA-binding protein that functions in genetic recombination as well as in transcriptional and translational control.</text>
</comment>
<comment type="subunit">
    <text evidence="1">Heterodimer of an alpha and a beta chain.</text>
</comment>
<comment type="similarity">
    <text evidence="1">Belongs to the bacterial histone-like protein family.</text>
</comment>